<gene>
    <name evidence="1" type="primary">recR</name>
    <name type="ordered locus">Nmul_A1856</name>
</gene>
<evidence type="ECO:0000255" key="1">
    <source>
        <dbReference type="HAMAP-Rule" id="MF_00017"/>
    </source>
</evidence>
<accession>Q2Y7X0</accession>
<comment type="function">
    <text evidence="1">May play a role in DNA repair. It seems to be involved in an RecBC-independent recombinational process of DNA repair. It may act with RecF and RecO.</text>
</comment>
<comment type="similarity">
    <text evidence="1">Belongs to the RecR family.</text>
</comment>
<proteinExistence type="inferred from homology"/>
<sequence>MNAPRSLDELINALRCLPGVGPRSAQRMAYHLLQRDQEGARRLADSLDYALEHVRHCEKCNNFTEEVVCELCSSQRRDPALLCVVEMPADLLMMEQAHCYKGMYFVLMGRLSPLDGIGPREINLDRLLKRARDNMVKEVILATNFTVEGEATAHYIGEMLQNEGLKITRIARGLPVGGELEHVDSGTLAQAVLERREVK</sequence>
<protein>
    <recommendedName>
        <fullName evidence="1">Recombination protein RecR</fullName>
    </recommendedName>
</protein>
<feature type="chain" id="PRO_0000322923" description="Recombination protein RecR">
    <location>
        <begin position="1"/>
        <end position="199"/>
    </location>
</feature>
<feature type="domain" description="Toprim" evidence="1">
    <location>
        <begin position="80"/>
        <end position="175"/>
    </location>
</feature>
<feature type="zinc finger region" description="C4-type" evidence="1">
    <location>
        <begin position="57"/>
        <end position="72"/>
    </location>
</feature>
<keyword id="KW-0227">DNA damage</keyword>
<keyword id="KW-0233">DNA recombination</keyword>
<keyword id="KW-0234">DNA repair</keyword>
<keyword id="KW-0479">Metal-binding</keyword>
<keyword id="KW-1185">Reference proteome</keyword>
<keyword id="KW-0862">Zinc</keyword>
<keyword id="KW-0863">Zinc-finger</keyword>
<reference key="1">
    <citation type="submission" date="2005-08" db="EMBL/GenBank/DDBJ databases">
        <title>Complete sequence of chromosome 1 of Nitrosospira multiformis ATCC 25196.</title>
        <authorList>
            <person name="Copeland A."/>
            <person name="Lucas S."/>
            <person name="Lapidus A."/>
            <person name="Barry K."/>
            <person name="Detter J.C."/>
            <person name="Glavina T."/>
            <person name="Hammon N."/>
            <person name="Israni S."/>
            <person name="Pitluck S."/>
            <person name="Chain P."/>
            <person name="Malfatti S."/>
            <person name="Shin M."/>
            <person name="Vergez L."/>
            <person name="Schmutz J."/>
            <person name="Larimer F."/>
            <person name="Land M."/>
            <person name="Hauser L."/>
            <person name="Kyrpides N."/>
            <person name="Lykidis A."/>
            <person name="Richardson P."/>
        </authorList>
    </citation>
    <scope>NUCLEOTIDE SEQUENCE [LARGE SCALE GENOMIC DNA]</scope>
    <source>
        <strain>ATCC 25196 / NCIMB 11849 / C 71</strain>
    </source>
</reference>
<organism>
    <name type="scientific">Nitrosospira multiformis (strain ATCC 25196 / NCIMB 11849 / C 71)</name>
    <dbReference type="NCBI Taxonomy" id="323848"/>
    <lineage>
        <taxon>Bacteria</taxon>
        <taxon>Pseudomonadati</taxon>
        <taxon>Pseudomonadota</taxon>
        <taxon>Betaproteobacteria</taxon>
        <taxon>Nitrosomonadales</taxon>
        <taxon>Nitrosomonadaceae</taxon>
        <taxon>Nitrosospira</taxon>
    </lineage>
</organism>
<name>RECR_NITMU</name>
<dbReference type="EMBL" id="CP000103">
    <property type="protein sequence ID" value="ABB75151.1"/>
    <property type="molecule type" value="Genomic_DNA"/>
</dbReference>
<dbReference type="RefSeq" id="WP_011381171.1">
    <property type="nucleotide sequence ID" value="NC_007614.1"/>
</dbReference>
<dbReference type="SMR" id="Q2Y7X0"/>
<dbReference type="STRING" id="323848.Nmul_A1856"/>
<dbReference type="KEGG" id="nmu:Nmul_A1856"/>
<dbReference type="eggNOG" id="COG0353">
    <property type="taxonomic scope" value="Bacteria"/>
</dbReference>
<dbReference type="HOGENOM" id="CLU_060739_1_2_4"/>
<dbReference type="OrthoDB" id="9802672at2"/>
<dbReference type="Proteomes" id="UP000002718">
    <property type="component" value="Chromosome"/>
</dbReference>
<dbReference type="GO" id="GO:0003677">
    <property type="term" value="F:DNA binding"/>
    <property type="evidence" value="ECO:0007669"/>
    <property type="project" value="UniProtKB-UniRule"/>
</dbReference>
<dbReference type="GO" id="GO:0008270">
    <property type="term" value="F:zinc ion binding"/>
    <property type="evidence" value="ECO:0007669"/>
    <property type="project" value="UniProtKB-KW"/>
</dbReference>
<dbReference type="GO" id="GO:0006310">
    <property type="term" value="P:DNA recombination"/>
    <property type="evidence" value="ECO:0007669"/>
    <property type="project" value="UniProtKB-UniRule"/>
</dbReference>
<dbReference type="GO" id="GO:0006281">
    <property type="term" value="P:DNA repair"/>
    <property type="evidence" value="ECO:0007669"/>
    <property type="project" value="UniProtKB-UniRule"/>
</dbReference>
<dbReference type="CDD" id="cd01025">
    <property type="entry name" value="TOPRIM_recR"/>
    <property type="match status" value="1"/>
</dbReference>
<dbReference type="Gene3D" id="3.40.1360.10">
    <property type="match status" value="1"/>
</dbReference>
<dbReference type="Gene3D" id="6.10.250.240">
    <property type="match status" value="1"/>
</dbReference>
<dbReference type="Gene3D" id="1.10.8.420">
    <property type="entry name" value="RecR Domain 1"/>
    <property type="match status" value="1"/>
</dbReference>
<dbReference type="HAMAP" id="MF_00017">
    <property type="entry name" value="RecR"/>
    <property type="match status" value="1"/>
</dbReference>
<dbReference type="InterPro" id="IPR000093">
    <property type="entry name" value="DNA_Rcmb_RecR"/>
</dbReference>
<dbReference type="InterPro" id="IPR023627">
    <property type="entry name" value="Rcmb_RecR"/>
</dbReference>
<dbReference type="InterPro" id="IPR015967">
    <property type="entry name" value="Rcmb_RecR_Znf"/>
</dbReference>
<dbReference type="InterPro" id="IPR006171">
    <property type="entry name" value="TOPRIM_dom"/>
</dbReference>
<dbReference type="InterPro" id="IPR034137">
    <property type="entry name" value="TOPRIM_RecR"/>
</dbReference>
<dbReference type="NCBIfam" id="TIGR00615">
    <property type="entry name" value="recR"/>
    <property type="match status" value="1"/>
</dbReference>
<dbReference type="PANTHER" id="PTHR30446">
    <property type="entry name" value="RECOMBINATION PROTEIN RECR"/>
    <property type="match status" value="1"/>
</dbReference>
<dbReference type="PANTHER" id="PTHR30446:SF0">
    <property type="entry name" value="RECOMBINATION PROTEIN RECR"/>
    <property type="match status" value="1"/>
</dbReference>
<dbReference type="Pfam" id="PF21175">
    <property type="entry name" value="RecR_C"/>
    <property type="match status" value="1"/>
</dbReference>
<dbReference type="Pfam" id="PF21176">
    <property type="entry name" value="RecR_HhH"/>
    <property type="match status" value="1"/>
</dbReference>
<dbReference type="Pfam" id="PF02132">
    <property type="entry name" value="RecR_ZnF"/>
    <property type="match status" value="1"/>
</dbReference>
<dbReference type="Pfam" id="PF13662">
    <property type="entry name" value="Toprim_4"/>
    <property type="match status" value="1"/>
</dbReference>
<dbReference type="SMART" id="SM00493">
    <property type="entry name" value="TOPRIM"/>
    <property type="match status" value="1"/>
</dbReference>
<dbReference type="SUPFAM" id="SSF111304">
    <property type="entry name" value="Recombination protein RecR"/>
    <property type="match status" value="1"/>
</dbReference>
<dbReference type="PROSITE" id="PS01300">
    <property type="entry name" value="RECR"/>
    <property type="match status" value="1"/>
</dbReference>
<dbReference type="PROSITE" id="PS50880">
    <property type="entry name" value="TOPRIM"/>
    <property type="match status" value="1"/>
</dbReference>